<evidence type="ECO:0000250" key="1">
    <source>
        <dbReference type="UniProtKB" id="Q9P2H0"/>
    </source>
</evidence>
<evidence type="ECO:0000255" key="2"/>
<evidence type="ECO:0000256" key="3">
    <source>
        <dbReference type="SAM" id="MobiDB-lite"/>
    </source>
</evidence>
<evidence type="ECO:0000312" key="4">
    <source>
        <dbReference type="MGI" id="MGI:2680221"/>
    </source>
</evidence>
<reference key="1">
    <citation type="journal article" date="2004" name="Genome Res.">
        <title>The status, quality, and expansion of the NIH full-length cDNA project: the Mammalian Gene Collection (MGC).</title>
        <authorList>
            <consortium name="The MGC Project Team"/>
        </authorList>
    </citation>
    <scope>NUCLEOTIDE SEQUENCE [LARGE SCALE MRNA]</scope>
    <source>
        <tissue>Brain</tissue>
    </source>
</reference>
<reference key="2">
    <citation type="journal article" date="2003" name="DNA Res.">
        <title>Prediction of the coding sequences of mouse homologues of KIAA gene: III. The complete nucleotide sequences of 500 mouse KIAA-homologous cDNAs identified by screening of terminal sequences of cDNA clones randomly sampled from size-fractionated libraries.</title>
        <authorList>
            <person name="Okazaki N."/>
            <person name="Kikuno R."/>
            <person name="Ohara R."/>
            <person name="Inamoto S."/>
            <person name="Koseki H."/>
            <person name="Hiraoka S."/>
            <person name="Saga Y."/>
            <person name="Nagase T."/>
            <person name="Ohara O."/>
            <person name="Koga H."/>
        </authorList>
    </citation>
    <scope>NUCLEOTIDE SEQUENCE [LARGE SCALE MRNA] OF 100-1103</scope>
    <source>
        <tissue>Brain</tissue>
    </source>
</reference>
<name>CE126_MOUSE</name>
<gene>
    <name evidence="4" type="primary">Cep126</name>
    <name type="synonym">Kiaa1377</name>
</gene>
<dbReference type="EMBL" id="BC119072">
    <property type="protein sequence ID" value="AAI19073.1"/>
    <property type="molecule type" value="mRNA"/>
</dbReference>
<dbReference type="EMBL" id="BC120489">
    <property type="protein sequence ID" value="AAI20490.1"/>
    <property type="molecule type" value="mRNA"/>
</dbReference>
<dbReference type="EMBL" id="AK129341">
    <property type="protein sequence ID" value="BAC98151.1"/>
    <property type="molecule type" value="mRNA"/>
</dbReference>
<dbReference type="CCDS" id="CCDS40534.1"/>
<dbReference type="RefSeq" id="NP_001038989.1">
    <property type="nucleotide sequence ID" value="NM_001045524.2"/>
</dbReference>
<dbReference type="SMR" id="Q0VBV7"/>
<dbReference type="BioGRID" id="231601">
    <property type="interactions" value="3"/>
</dbReference>
<dbReference type="FunCoup" id="Q0VBV7">
    <property type="interactions" value="260"/>
</dbReference>
<dbReference type="STRING" id="10090.ENSMUSP00000042904"/>
<dbReference type="iPTMnet" id="Q0VBV7"/>
<dbReference type="PhosphoSitePlus" id="Q0VBV7"/>
<dbReference type="PaxDb" id="10090-ENSMUSP00000042904"/>
<dbReference type="ProteomicsDB" id="280046"/>
<dbReference type="Antibodypedia" id="51505">
    <property type="antibodies" value="30 antibodies from 8 providers"/>
</dbReference>
<dbReference type="Ensembl" id="ENSMUST00000037397.8">
    <property type="protein sequence ID" value="ENSMUSP00000042904.7"/>
    <property type="gene ID" value="ENSMUSG00000040729.9"/>
</dbReference>
<dbReference type="GeneID" id="234915"/>
<dbReference type="KEGG" id="mmu:234915"/>
<dbReference type="UCSC" id="uc009odj.1">
    <property type="organism name" value="mouse"/>
</dbReference>
<dbReference type="AGR" id="MGI:2680221"/>
<dbReference type="CTD" id="57562"/>
<dbReference type="MGI" id="MGI:2680221">
    <property type="gene designation" value="Cep126"/>
</dbReference>
<dbReference type="VEuPathDB" id="HostDB:ENSMUSG00000040729"/>
<dbReference type="eggNOG" id="ENOG502QR78">
    <property type="taxonomic scope" value="Eukaryota"/>
</dbReference>
<dbReference type="GeneTree" id="ENSGT00390000013786"/>
<dbReference type="HOGENOM" id="CLU_010202_0_0_1"/>
<dbReference type="InParanoid" id="Q0VBV7"/>
<dbReference type="OrthoDB" id="9900339at2759"/>
<dbReference type="PhylomeDB" id="Q0VBV7"/>
<dbReference type="TreeFam" id="TF336632"/>
<dbReference type="BioGRID-ORCS" id="234915">
    <property type="hits" value="3 hits in 78 CRISPR screens"/>
</dbReference>
<dbReference type="PRO" id="PR:Q0VBV7"/>
<dbReference type="Proteomes" id="UP000000589">
    <property type="component" value="Chromosome 9"/>
</dbReference>
<dbReference type="RNAct" id="Q0VBV7">
    <property type="molecule type" value="protein"/>
</dbReference>
<dbReference type="Bgee" id="ENSMUSG00000040729">
    <property type="expression patterns" value="Expressed in spermatid and 164 other cell types or tissues"/>
</dbReference>
<dbReference type="ExpressionAtlas" id="Q0VBV7">
    <property type="expression patterns" value="baseline and differential"/>
</dbReference>
<dbReference type="GO" id="GO:0005813">
    <property type="term" value="C:centrosome"/>
    <property type="evidence" value="ECO:0000250"/>
    <property type="project" value="UniProtKB"/>
</dbReference>
<dbReference type="GO" id="GO:0097546">
    <property type="term" value="C:ciliary base"/>
    <property type="evidence" value="ECO:0000250"/>
    <property type="project" value="UniProtKB"/>
</dbReference>
<dbReference type="GO" id="GO:0005737">
    <property type="term" value="C:cytoplasm"/>
    <property type="evidence" value="ECO:0007669"/>
    <property type="project" value="UniProtKB-KW"/>
</dbReference>
<dbReference type="GO" id="GO:0030496">
    <property type="term" value="C:midbody"/>
    <property type="evidence" value="ECO:0007669"/>
    <property type="project" value="UniProtKB-SubCell"/>
</dbReference>
<dbReference type="GO" id="GO:0060271">
    <property type="term" value="P:cilium assembly"/>
    <property type="evidence" value="ECO:0000250"/>
    <property type="project" value="UniProtKB"/>
</dbReference>
<dbReference type="GO" id="GO:0031122">
    <property type="term" value="P:cytoplasmic microtubule organization"/>
    <property type="evidence" value="ECO:0000250"/>
    <property type="project" value="UniProtKB"/>
</dbReference>
<dbReference type="GO" id="GO:0007052">
    <property type="term" value="P:mitotic spindle organization"/>
    <property type="evidence" value="ECO:0000250"/>
    <property type="project" value="UniProtKB"/>
</dbReference>
<dbReference type="GO" id="GO:1905515">
    <property type="term" value="P:non-motile cilium assembly"/>
    <property type="evidence" value="ECO:0007669"/>
    <property type="project" value="InterPro"/>
</dbReference>
<dbReference type="InterPro" id="IPR028257">
    <property type="entry name" value="CEP126"/>
</dbReference>
<dbReference type="PANTHER" id="PTHR31191">
    <property type="entry name" value="CENTROSOMAL PROTEIN CEP126"/>
    <property type="match status" value="1"/>
</dbReference>
<dbReference type="PANTHER" id="PTHR31191:SF4">
    <property type="entry name" value="CENTROSOMAL PROTEIN OF 126 KDA"/>
    <property type="match status" value="1"/>
</dbReference>
<dbReference type="Pfam" id="PF15352">
    <property type="entry name" value="K1377"/>
    <property type="match status" value="1"/>
</dbReference>
<sequence length="1103" mass="123685">MLAGRPGAQSAGAGVGAGPPDAPGARDGGGRPRPGAYLDMKIHLEKNLEEERQMLLQQQKLCRNRARKYFMESNRRRKAFEEKRQKQEEREYQIRERILQQRKQKFEEVTEKFQRAHVPVSQRRRAVFQNPVPPLEEALKQIQESNLKSEVNIPLFHRPATNWRAIDSALPSTLSKNDHKHQKHLVRRINRNKEMKENNIANLATNKNVFQLKLEETQKLLEDQHLSDLQKFCDEVNQITNSETLSSIDSLEAGEREEIYITLSMKPSTSTQQNSVPLQSANLQAAHLDCFDEDKLSFSKTQHINNWLTNLDAQNSQPVASFSDILIKSNVLPSWECLNSKEQNPPALSRTVGRTTRTTSDSMVFVCSPSVVALDKKGENTAESNVVRASDPTEGAVQRERPAQMESPTFKVSRAWTTAESLTQETASFSVQERPSELTWESRTASIPASSVTVLSPNLQAGGPLAENNTQIKEIDPVQCSDKLDELKNMEHERINHLNCNKEKYLFSPNFQTTCALQNSNSNDRKQKESGPSAALCNNPPDCDLPEQHSIKHSVHEQNGVRLLKSILKKESRYEHNYLRALVMKQGFKFRHQKAETVRDSIELTKQKGKGAEISKTSKKLRWFDESANLENAVDDCHPVRNRAGMAPRWLQRCHTNSGTYNLTSIPECPVHSAAGKKAKADSVPENATDLGRYEIDSVPLNSSVSLGFSFAKQAWSACRRGESKAPVHASDSKTQKTKPQRGVKFTRRTGSSKVQKGLVQNRKPTVSQPQTSSKANTVAQTQGKLIITHPPPKPPTNIKSGKNMQVSPGQSAIPEHSQNVMTQSCLSPASVLPTEYHLNQGTQESSLPFSDTCSNLPAVSPALPTPYSSECQTLAKANSNGTAFLKDGAVYCTHRSPVCEESYQSFTHRNTEEESILPWRRRINGHQNERTTDSTVTRRKQIVENKWKRLLEQKRKTSGSIGMKYTEQITHFGQNVPPSTTEQIQAPRGVKTEEVSDSTSEFLVAENLMNSSVPEDEILTAINSKHLQKPNLSQPTNVCALSAEEQKILKSLHHLDERLYYVQEAIRKNPSIKNTLQLIPLLSSQPRASLSPDVGSTVQRKY</sequence>
<protein>
    <recommendedName>
        <fullName evidence="4">Centrosomal protein of 126 kDa</fullName>
    </recommendedName>
</protein>
<accession>Q0VBV7</accession>
<accession>Q6ZPS8</accession>
<organism>
    <name type="scientific">Mus musculus</name>
    <name type="common">Mouse</name>
    <dbReference type="NCBI Taxonomy" id="10090"/>
    <lineage>
        <taxon>Eukaryota</taxon>
        <taxon>Metazoa</taxon>
        <taxon>Chordata</taxon>
        <taxon>Craniata</taxon>
        <taxon>Vertebrata</taxon>
        <taxon>Euteleostomi</taxon>
        <taxon>Mammalia</taxon>
        <taxon>Eutheria</taxon>
        <taxon>Euarchontoglires</taxon>
        <taxon>Glires</taxon>
        <taxon>Rodentia</taxon>
        <taxon>Myomorpha</taxon>
        <taxon>Muroidea</taxon>
        <taxon>Muridae</taxon>
        <taxon>Murinae</taxon>
        <taxon>Mus</taxon>
        <taxon>Mus</taxon>
    </lineage>
</organism>
<comment type="function">
    <text evidence="1">Participate in cytokinesis (By similarity). Necessary for microtubules and mitotic spindle organization (By similarity). Involved in primary cilium formation (By similarity).</text>
</comment>
<comment type="subunit">
    <text evidence="1">Interacts with DCTN1 (By similarity).</text>
</comment>
<comment type="subcellular location">
    <subcellularLocation>
        <location evidence="1">Midbody</location>
    </subcellularLocation>
    <subcellularLocation>
        <location evidence="1">Cytoplasm</location>
        <location evidence="1">Cytoskeleton</location>
        <location evidence="1">Microtubule organizing center</location>
        <location evidence="1">Centrosome</location>
    </subcellularLocation>
    <subcellularLocation>
        <location evidence="1">Cytoplasm</location>
        <location evidence="1">Cytoskeleton</location>
        <location evidence="1">Cilium basal body</location>
    </subcellularLocation>
</comment>
<proteinExistence type="evidence at transcript level"/>
<keyword id="KW-0966">Cell projection</keyword>
<keyword id="KW-0175">Coiled coil</keyword>
<keyword id="KW-0963">Cytoplasm</keyword>
<keyword id="KW-0206">Cytoskeleton</keyword>
<keyword id="KW-1185">Reference proteome</keyword>
<feature type="chain" id="PRO_0000295172" description="Centrosomal protein of 126 kDa">
    <location>
        <begin position="1"/>
        <end position="1103"/>
    </location>
</feature>
<feature type="region of interest" description="Disordered" evidence="3">
    <location>
        <begin position="1"/>
        <end position="36"/>
    </location>
</feature>
<feature type="region of interest" description="Disordered" evidence="3">
    <location>
        <begin position="380"/>
        <end position="409"/>
    </location>
</feature>
<feature type="region of interest" description="Disordered" evidence="3">
    <location>
        <begin position="723"/>
        <end position="812"/>
    </location>
</feature>
<feature type="coiled-coil region" evidence="2">
    <location>
        <begin position="43"/>
        <end position="116"/>
    </location>
</feature>
<feature type="coiled-coil region" evidence="2">
    <location>
        <begin position="182"/>
        <end position="222"/>
    </location>
</feature>
<feature type="compositionally biased region" description="Low complexity" evidence="3">
    <location>
        <begin position="1"/>
        <end position="12"/>
    </location>
</feature>
<feature type="compositionally biased region" description="Basic and acidic residues" evidence="3">
    <location>
        <begin position="723"/>
        <end position="735"/>
    </location>
</feature>
<feature type="compositionally biased region" description="Basic residues" evidence="3">
    <location>
        <begin position="736"/>
        <end position="748"/>
    </location>
</feature>
<feature type="compositionally biased region" description="Polar residues" evidence="3">
    <location>
        <begin position="763"/>
        <end position="784"/>
    </location>
</feature>
<feature type="compositionally biased region" description="Polar residues" evidence="3">
    <location>
        <begin position="798"/>
        <end position="812"/>
    </location>
</feature>